<dbReference type="EC" id="7.4.2.8" evidence="1"/>
<dbReference type="EMBL" id="AP008957">
    <property type="protein sequence ID" value="BAH32881.1"/>
    <property type="molecule type" value="Genomic_DNA"/>
</dbReference>
<dbReference type="RefSeq" id="WP_019747784.1">
    <property type="nucleotide sequence ID" value="NC_012490.1"/>
</dbReference>
<dbReference type="SMR" id="C0ZWZ6"/>
<dbReference type="GeneID" id="57487721"/>
<dbReference type="KEGG" id="rer:RER_21730"/>
<dbReference type="eggNOG" id="COG0653">
    <property type="taxonomic scope" value="Bacteria"/>
</dbReference>
<dbReference type="HOGENOM" id="CLU_005314_3_0_11"/>
<dbReference type="Proteomes" id="UP000002204">
    <property type="component" value="Chromosome"/>
</dbReference>
<dbReference type="GO" id="GO:0031522">
    <property type="term" value="C:cell envelope Sec protein transport complex"/>
    <property type="evidence" value="ECO:0007669"/>
    <property type="project" value="TreeGrafter"/>
</dbReference>
<dbReference type="GO" id="GO:0005829">
    <property type="term" value="C:cytosol"/>
    <property type="evidence" value="ECO:0007669"/>
    <property type="project" value="TreeGrafter"/>
</dbReference>
<dbReference type="GO" id="GO:0005886">
    <property type="term" value="C:plasma membrane"/>
    <property type="evidence" value="ECO:0007669"/>
    <property type="project" value="UniProtKB-SubCell"/>
</dbReference>
<dbReference type="GO" id="GO:0005524">
    <property type="term" value="F:ATP binding"/>
    <property type="evidence" value="ECO:0007669"/>
    <property type="project" value="UniProtKB-UniRule"/>
</dbReference>
<dbReference type="GO" id="GO:0008564">
    <property type="term" value="F:protein-exporting ATPase activity"/>
    <property type="evidence" value="ECO:0007669"/>
    <property type="project" value="UniProtKB-EC"/>
</dbReference>
<dbReference type="GO" id="GO:0065002">
    <property type="term" value="P:intracellular protein transmembrane transport"/>
    <property type="evidence" value="ECO:0007669"/>
    <property type="project" value="UniProtKB-UniRule"/>
</dbReference>
<dbReference type="GO" id="GO:0017038">
    <property type="term" value="P:protein import"/>
    <property type="evidence" value="ECO:0007669"/>
    <property type="project" value="InterPro"/>
</dbReference>
<dbReference type="GO" id="GO:0006605">
    <property type="term" value="P:protein targeting"/>
    <property type="evidence" value="ECO:0007669"/>
    <property type="project" value="UniProtKB-UniRule"/>
</dbReference>
<dbReference type="GO" id="GO:0043952">
    <property type="term" value="P:protein transport by the Sec complex"/>
    <property type="evidence" value="ECO:0007669"/>
    <property type="project" value="TreeGrafter"/>
</dbReference>
<dbReference type="CDD" id="cd17928">
    <property type="entry name" value="DEXDc_SecA"/>
    <property type="match status" value="1"/>
</dbReference>
<dbReference type="CDD" id="cd18803">
    <property type="entry name" value="SF2_C_secA"/>
    <property type="match status" value="1"/>
</dbReference>
<dbReference type="FunFam" id="1.10.3060.10:FF:000002">
    <property type="entry name" value="Preprotein translocase subunit SecA"/>
    <property type="match status" value="1"/>
</dbReference>
<dbReference type="FunFam" id="3.40.50.300:FF:000113">
    <property type="entry name" value="Preprotein translocase subunit SecA"/>
    <property type="match status" value="1"/>
</dbReference>
<dbReference type="FunFam" id="3.40.50.300:FF:000334">
    <property type="entry name" value="Protein translocase subunit SecA"/>
    <property type="match status" value="1"/>
</dbReference>
<dbReference type="FunFam" id="3.90.1440.10:FF:000002">
    <property type="entry name" value="Protein translocase subunit SecA"/>
    <property type="match status" value="1"/>
</dbReference>
<dbReference type="Gene3D" id="1.10.3060.10">
    <property type="entry name" value="Helical scaffold and wing domains of SecA"/>
    <property type="match status" value="1"/>
</dbReference>
<dbReference type="Gene3D" id="3.40.50.300">
    <property type="entry name" value="P-loop containing nucleotide triphosphate hydrolases"/>
    <property type="match status" value="2"/>
</dbReference>
<dbReference type="Gene3D" id="3.90.1440.10">
    <property type="entry name" value="SecA, preprotein cross-linking domain"/>
    <property type="match status" value="1"/>
</dbReference>
<dbReference type="HAMAP" id="MF_01382">
    <property type="entry name" value="SecA"/>
    <property type="match status" value="1"/>
</dbReference>
<dbReference type="InterPro" id="IPR014001">
    <property type="entry name" value="Helicase_ATP-bd"/>
</dbReference>
<dbReference type="InterPro" id="IPR027417">
    <property type="entry name" value="P-loop_NTPase"/>
</dbReference>
<dbReference type="InterPro" id="IPR000185">
    <property type="entry name" value="SecA"/>
</dbReference>
<dbReference type="InterPro" id="IPR011115">
    <property type="entry name" value="SecA_DEAD"/>
</dbReference>
<dbReference type="InterPro" id="IPR014018">
    <property type="entry name" value="SecA_motor_DEAD"/>
</dbReference>
<dbReference type="InterPro" id="IPR011130">
    <property type="entry name" value="SecA_preprotein_X-link_dom"/>
</dbReference>
<dbReference type="InterPro" id="IPR044722">
    <property type="entry name" value="SecA_SF2_C"/>
</dbReference>
<dbReference type="InterPro" id="IPR011116">
    <property type="entry name" value="SecA_Wing/Scaffold"/>
</dbReference>
<dbReference type="InterPro" id="IPR036266">
    <property type="entry name" value="SecA_Wing/Scaffold_sf"/>
</dbReference>
<dbReference type="InterPro" id="IPR036670">
    <property type="entry name" value="SecA_X-link_sf"/>
</dbReference>
<dbReference type="NCBIfam" id="NF009538">
    <property type="entry name" value="PRK12904.1"/>
    <property type="match status" value="1"/>
</dbReference>
<dbReference type="NCBIfam" id="TIGR00963">
    <property type="entry name" value="secA"/>
    <property type="match status" value="1"/>
</dbReference>
<dbReference type="PANTHER" id="PTHR30612:SF0">
    <property type="entry name" value="CHLOROPLAST PROTEIN-TRANSPORTING ATPASE"/>
    <property type="match status" value="1"/>
</dbReference>
<dbReference type="PANTHER" id="PTHR30612">
    <property type="entry name" value="SECA INNER MEMBRANE COMPONENT OF SEC PROTEIN SECRETION SYSTEM"/>
    <property type="match status" value="1"/>
</dbReference>
<dbReference type="Pfam" id="PF21090">
    <property type="entry name" value="P-loop_SecA"/>
    <property type="match status" value="1"/>
</dbReference>
<dbReference type="Pfam" id="PF07517">
    <property type="entry name" value="SecA_DEAD"/>
    <property type="match status" value="1"/>
</dbReference>
<dbReference type="Pfam" id="PF01043">
    <property type="entry name" value="SecA_PP_bind"/>
    <property type="match status" value="1"/>
</dbReference>
<dbReference type="Pfam" id="PF07516">
    <property type="entry name" value="SecA_SW"/>
    <property type="match status" value="1"/>
</dbReference>
<dbReference type="PRINTS" id="PR00906">
    <property type="entry name" value="SECA"/>
</dbReference>
<dbReference type="SMART" id="SM00957">
    <property type="entry name" value="SecA_DEAD"/>
    <property type="match status" value="1"/>
</dbReference>
<dbReference type="SMART" id="SM00958">
    <property type="entry name" value="SecA_PP_bind"/>
    <property type="match status" value="1"/>
</dbReference>
<dbReference type="SUPFAM" id="SSF81886">
    <property type="entry name" value="Helical scaffold and wing domains of SecA"/>
    <property type="match status" value="1"/>
</dbReference>
<dbReference type="SUPFAM" id="SSF52540">
    <property type="entry name" value="P-loop containing nucleoside triphosphate hydrolases"/>
    <property type="match status" value="2"/>
</dbReference>
<dbReference type="SUPFAM" id="SSF81767">
    <property type="entry name" value="Pre-protein crosslinking domain of SecA"/>
    <property type="match status" value="1"/>
</dbReference>
<dbReference type="PROSITE" id="PS51196">
    <property type="entry name" value="SECA_MOTOR_DEAD"/>
    <property type="match status" value="1"/>
</dbReference>
<organism>
    <name type="scientific">Rhodococcus erythropolis (strain PR4 / NBRC 100887)</name>
    <dbReference type="NCBI Taxonomy" id="234621"/>
    <lineage>
        <taxon>Bacteria</taxon>
        <taxon>Bacillati</taxon>
        <taxon>Actinomycetota</taxon>
        <taxon>Actinomycetes</taxon>
        <taxon>Mycobacteriales</taxon>
        <taxon>Nocardiaceae</taxon>
        <taxon>Rhodococcus</taxon>
        <taxon>Rhodococcus erythropolis group</taxon>
    </lineage>
</organism>
<evidence type="ECO:0000255" key="1">
    <source>
        <dbReference type="HAMAP-Rule" id="MF_01382"/>
    </source>
</evidence>
<evidence type="ECO:0000256" key="2">
    <source>
        <dbReference type="SAM" id="MobiDB-lite"/>
    </source>
</evidence>
<sequence length="947" mass="104781">MPSLSLSKLLRVGEGRMVKRLKHIAEHVESLSPDVEGLTDEQLKAKTTEFRERYAAGETLDELLPEAFSVAREASWRVIDQKHFHVQIMGGAALHFGNVAEMKTGEGKTLTCVLPAYLNAIAGDGVHVVTVNDYLAKRDSEWMGRVHRALGLETSVILSGMTPAERRVAYAADITYGTNNEFGFDYLRDNMTHSLDDLVQRGHAFAIVDEVDSILIDEARTPLIISGPADGSSKWYSEFARIAPLLKKDVHYEVDIRKRTIGVHEAGVELVEDQLGIDNLYEAANSPLVSYLNNAIKAKELYTKDKDYIVRDGEVIIVDEFTGRVLVGRRYNEGMHQAIEAKEKVEIKAENQTLATITLQNYFRLYDKLSGMTGTAETEAAELHQTYTLGVIPIPTNRPMVRVDNGDLIYKTEEAKFDAVVDDVVERHENGQPVLIGTTSVERSEYLSKQFTKRGVAHNVLNAKFHEKEATIIAEAGRSGAVTVATNMAGRGTDVVLGGNPDIIADIALRKKGLDPVTTPDEYEAAWDAVLDEVKAEVKADAEKVRDAGGLYVLGTERHESRRIDNQLRGRSGRQGDPGESRFYLSLGDELMRRFNGSALESIMTRLNLPDDVPIEAKMVSKAIKSAQTQVEQQNFEIRKNVLKYDEVMNQQRTVIYKERRQILEGEDMEGQVEQMITDVVTAYVDGATAEGYVEDWDLEQLWTALKTLYPVGIDHKTLAGEDGAGINSDLSRDDLRTALLEDAHAAYKKREAEIDAIAGENGMRELERRVFLSVLDRKWREHLYEMDYLKEGIGLRAMAQRDPLVEYQREGYDMFIGMLDGLKEESVGFLFNLQVEAAPAQPASGISVTAGSAAAASATAPKPLPTQEAAARTTGTAAPTALRAKGLDDEGPSRLTYTGPDEDGKAKATRDSAADSGDGAASRRERREAARTQSKSNRAPKSKRKR</sequence>
<protein>
    <recommendedName>
        <fullName evidence="1">Protein translocase subunit SecA</fullName>
        <ecNumber evidence="1">7.4.2.8</ecNumber>
    </recommendedName>
</protein>
<keyword id="KW-0067">ATP-binding</keyword>
<keyword id="KW-1003">Cell membrane</keyword>
<keyword id="KW-0963">Cytoplasm</keyword>
<keyword id="KW-0472">Membrane</keyword>
<keyword id="KW-0547">Nucleotide-binding</keyword>
<keyword id="KW-0653">Protein transport</keyword>
<keyword id="KW-1278">Translocase</keyword>
<keyword id="KW-0811">Translocation</keyword>
<keyword id="KW-0813">Transport</keyword>
<reference key="1">
    <citation type="submission" date="2005-03" db="EMBL/GenBank/DDBJ databases">
        <title>Comparison of the complete genome sequences of Rhodococcus erythropolis PR4 and Rhodococcus opacus B4.</title>
        <authorList>
            <person name="Takarada H."/>
            <person name="Sekine M."/>
            <person name="Hosoyama A."/>
            <person name="Yamada R."/>
            <person name="Fujisawa T."/>
            <person name="Omata S."/>
            <person name="Shimizu A."/>
            <person name="Tsukatani N."/>
            <person name="Tanikawa S."/>
            <person name="Fujita N."/>
            <person name="Harayama S."/>
        </authorList>
    </citation>
    <scope>NUCLEOTIDE SEQUENCE [LARGE SCALE GENOMIC DNA]</scope>
    <source>
        <strain>PR4 / NBRC 100887</strain>
    </source>
</reference>
<name>SECA_RHOE4</name>
<accession>C0ZWZ6</accession>
<gene>
    <name evidence="1" type="primary">secA</name>
    <name type="ordered locus">RER_21730</name>
</gene>
<comment type="function">
    <text evidence="1">Part of the Sec protein translocase complex. Interacts with the SecYEG preprotein conducting channel. Has a central role in coupling the hydrolysis of ATP to the transfer of proteins into and across the cell membrane, serving as an ATP-driven molecular motor driving the stepwise translocation of polypeptide chains across the membrane.</text>
</comment>
<comment type="catalytic activity">
    <reaction evidence="1">
        <text>ATP + H2O + cellular proteinSide 1 = ADP + phosphate + cellular proteinSide 2.</text>
        <dbReference type="EC" id="7.4.2.8"/>
    </reaction>
</comment>
<comment type="subunit">
    <text evidence="1">Monomer and homodimer. Part of the essential Sec protein translocation apparatus which comprises SecA, SecYEG and auxiliary proteins SecDF. Other proteins may also be involved.</text>
</comment>
<comment type="subcellular location">
    <subcellularLocation>
        <location evidence="1">Cell membrane</location>
        <topology evidence="1">Peripheral membrane protein</topology>
        <orientation evidence="1">Cytoplasmic side</orientation>
    </subcellularLocation>
    <subcellularLocation>
        <location evidence="1">Cytoplasm</location>
    </subcellularLocation>
    <text evidence="1">Distribution is 50-50.</text>
</comment>
<comment type="similarity">
    <text evidence="1">Belongs to the SecA family.</text>
</comment>
<feature type="chain" id="PRO_1000215116" description="Protein translocase subunit SecA">
    <location>
        <begin position="1"/>
        <end position="947"/>
    </location>
</feature>
<feature type="region of interest" description="Disordered" evidence="2">
    <location>
        <begin position="860"/>
        <end position="947"/>
    </location>
</feature>
<feature type="compositionally biased region" description="Low complexity" evidence="2">
    <location>
        <begin position="870"/>
        <end position="885"/>
    </location>
</feature>
<feature type="compositionally biased region" description="Basic and acidic residues" evidence="2">
    <location>
        <begin position="903"/>
        <end position="914"/>
    </location>
</feature>
<feature type="compositionally biased region" description="Basic and acidic residues" evidence="2">
    <location>
        <begin position="922"/>
        <end position="931"/>
    </location>
</feature>
<feature type="binding site" evidence="1">
    <location>
        <position position="87"/>
    </location>
    <ligand>
        <name>ATP</name>
        <dbReference type="ChEBI" id="CHEBI:30616"/>
    </ligand>
</feature>
<feature type="binding site" evidence="1">
    <location>
        <begin position="105"/>
        <end position="109"/>
    </location>
    <ligand>
        <name>ATP</name>
        <dbReference type="ChEBI" id="CHEBI:30616"/>
    </ligand>
</feature>
<feature type="binding site" evidence="1">
    <location>
        <position position="494"/>
    </location>
    <ligand>
        <name>ATP</name>
        <dbReference type="ChEBI" id="CHEBI:30616"/>
    </ligand>
</feature>
<proteinExistence type="inferred from homology"/>